<protein>
    <recommendedName>
        <fullName evidence="1">Sirohydrochlorin cobaltochelatase</fullName>
        <ecNumber evidence="1">4.99.1.3</ecNumber>
    </recommendedName>
    <alternativeName>
        <fullName evidence="1">CbiXS</fullName>
    </alternativeName>
</protein>
<keyword id="KW-0169">Cobalamin biosynthesis</keyword>
<keyword id="KW-0170">Cobalt</keyword>
<keyword id="KW-0456">Lyase</keyword>
<keyword id="KW-0479">Metal-binding</keyword>
<gene>
    <name evidence="1" type="primary">cbiX</name>
    <name type="ordered locus">M1627_1810</name>
</gene>
<feature type="chain" id="PRO_1000212923" description="Sirohydrochlorin cobaltochelatase">
    <location>
        <begin position="1"/>
        <end position="128"/>
    </location>
</feature>
<feature type="active site" description="Proton acceptor" evidence="1">
    <location>
        <position position="9"/>
    </location>
</feature>
<feature type="binding site" evidence="1">
    <location>
        <position position="9"/>
    </location>
    <ligand>
        <name>Co(2+)</name>
        <dbReference type="ChEBI" id="CHEBI:48828"/>
    </ligand>
</feature>
<feature type="binding site" evidence="1">
    <location>
        <position position="43"/>
    </location>
    <ligand>
        <name>substrate</name>
    </ligand>
</feature>
<feature type="binding site" evidence="1">
    <location>
        <begin position="68"/>
        <end position="73"/>
    </location>
    <ligand>
        <name>substrate</name>
    </ligand>
</feature>
<feature type="binding site" evidence="1">
    <location>
        <position position="73"/>
    </location>
    <ligand>
        <name>Co(2+)</name>
        <dbReference type="ChEBI" id="CHEBI:48828"/>
    </ligand>
</feature>
<proteinExistence type="inferred from homology"/>
<dbReference type="EC" id="4.99.1.3" evidence="1"/>
<dbReference type="EMBL" id="CP001401">
    <property type="protein sequence ID" value="ACP55685.1"/>
    <property type="molecule type" value="Genomic_DNA"/>
</dbReference>
<dbReference type="RefSeq" id="WP_012711674.1">
    <property type="nucleotide sequence ID" value="NC_012632.1"/>
</dbReference>
<dbReference type="SMR" id="C3MZ53"/>
<dbReference type="KEGG" id="sim:M1627_1810"/>
<dbReference type="HOGENOM" id="CLU_065901_2_1_2"/>
<dbReference type="UniPathway" id="UPA00148">
    <property type="reaction ID" value="UER00223"/>
</dbReference>
<dbReference type="Proteomes" id="UP000002307">
    <property type="component" value="Chromosome"/>
</dbReference>
<dbReference type="GO" id="GO:0050897">
    <property type="term" value="F:cobalt ion binding"/>
    <property type="evidence" value="ECO:0007669"/>
    <property type="project" value="UniProtKB-UniRule"/>
</dbReference>
<dbReference type="GO" id="GO:0016852">
    <property type="term" value="F:sirohydrochlorin cobaltochelatase activity"/>
    <property type="evidence" value="ECO:0007669"/>
    <property type="project" value="UniProtKB-UniRule"/>
</dbReference>
<dbReference type="GO" id="GO:0019251">
    <property type="term" value="P:anaerobic cobalamin biosynthetic process"/>
    <property type="evidence" value="ECO:0007669"/>
    <property type="project" value="UniProtKB-UniRule"/>
</dbReference>
<dbReference type="CDD" id="cd03416">
    <property type="entry name" value="CbiX_SirB_N"/>
    <property type="match status" value="1"/>
</dbReference>
<dbReference type="Gene3D" id="3.40.50.1400">
    <property type="match status" value="1"/>
</dbReference>
<dbReference type="HAMAP" id="MF_00785">
    <property type="entry name" value="CbiX"/>
    <property type="match status" value="1"/>
</dbReference>
<dbReference type="InterPro" id="IPR002762">
    <property type="entry name" value="CbiX-like"/>
</dbReference>
<dbReference type="InterPro" id="IPR023652">
    <property type="entry name" value="SiroHydchlorin_Cochelatase"/>
</dbReference>
<dbReference type="InterPro" id="IPR050963">
    <property type="entry name" value="Sirohydro_Cobaltochel/CbiX"/>
</dbReference>
<dbReference type="PANTHER" id="PTHR33542">
    <property type="entry name" value="SIROHYDROCHLORIN FERROCHELATASE, CHLOROPLASTIC"/>
    <property type="match status" value="1"/>
</dbReference>
<dbReference type="PANTHER" id="PTHR33542:SF3">
    <property type="entry name" value="SIROHYDROCHLORIN FERROCHELATASE, CHLOROPLASTIC"/>
    <property type="match status" value="1"/>
</dbReference>
<dbReference type="Pfam" id="PF01903">
    <property type="entry name" value="CbiX"/>
    <property type="match status" value="1"/>
</dbReference>
<dbReference type="SUPFAM" id="SSF53800">
    <property type="entry name" value="Chelatase"/>
    <property type="match status" value="1"/>
</dbReference>
<evidence type="ECO:0000255" key="1">
    <source>
        <dbReference type="HAMAP-Rule" id="MF_00785"/>
    </source>
</evidence>
<comment type="function">
    <text evidence="1">Catalyzes the insertion of Co(2+) into sirohydrochlorin as part of the anaerobic pathway to cobalamin biosynthesis.</text>
</comment>
<comment type="catalytic activity">
    <reaction evidence="1">
        <text>Co-sirohydrochlorin + 2 H(+) = sirohydrochlorin + Co(2+)</text>
        <dbReference type="Rhea" id="RHEA:15893"/>
        <dbReference type="ChEBI" id="CHEBI:15378"/>
        <dbReference type="ChEBI" id="CHEBI:48828"/>
        <dbReference type="ChEBI" id="CHEBI:58351"/>
        <dbReference type="ChEBI" id="CHEBI:60049"/>
        <dbReference type="EC" id="4.99.1.3"/>
    </reaction>
</comment>
<comment type="pathway">
    <text evidence="1">Cofactor biosynthesis; adenosylcobalamin biosynthesis; cob(II)yrinate a,c-diamide from sirohydrochlorin (anaerobic route): step 1/10.</text>
</comment>
<comment type="subunit">
    <text evidence="1">Homotetramer; dimer of dimers.</text>
</comment>
<comment type="similarity">
    <text evidence="1">Belongs to the CbiX family. CbiXS subfamily.</text>
</comment>
<organism>
    <name type="scientific">Saccharolobus islandicus (strain M.16.27)</name>
    <name type="common">Sulfolobus islandicus</name>
    <dbReference type="NCBI Taxonomy" id="427318"/>
    <lineage>
        <taxon>Archaea</taxon>
        <taxon>Thermoproteota</taxon>
        <taxon>Thermoprotei</taxon>
        <taxon>Sulfolobales</taxon>
        <taxon>Sulfolobaceae</taxon>
        <taxon>Saccharolobus</taxon>
    </lineage>
</organism>
<reference key="1">
    <citation type="journal article" date="2009" name="Proc. Natl. Acad. Sci. U.S.A.">
        <title>Biogeography of the Sulfolobus islandicus pan-genome.</title>
        <authorList>
            <person name="Reno M.L."/>
            <person name="Held N.L."/>
            <person name="Fields C.J."/>
            <person name="Burke P.V."/>
            <person name="Whitaker R.J."/>
        </authorList>
    </citation>
    <scope>NUCLEOTIDE SEQUENCE [LARGE SCALE GENOMIC DNA]</scope>
    <source>
        <strain>M.16.27</strain>
    </source>
</reference>
<accession>C3MZ53</accession>
<sequence length="128" mass="14531">MLGVLLVLHGSKIPEWKDVGIKYAEYLSRYFNLVEFGFLEFNKPTLSEALSNLLAKGANKIVVVPLLFATGTHFKRDIPRLLGIDGDEKKIQYMGKEIEIIIADPLGFDEKIGEVLVKRVNETYNKNY</sequence>
<name>CBIX_SACI3</name>